<feature type="chain" id="PRO_0000080353" description="G2/mitotic-specific cyclin-B1">
    <location>
        <begin position="1"/>
        <end position="423"/>
    </location>
</feature>
<feature type="region of interest" description="Interaction with CDK2" evidence="1">
    <location>
        <begin position="159"/>
        <end position="167"/>
    </location>
</feature>
<feature type="region of interest" description="Interaction with CDK2" evidence="1">
    <location>
        <begin position="248"/>
        <end position="251"/>
    </location>
</feature>
<feature type="modified residue" description="Phosphoserine; by CDK1" evidence="2">
    <location>
        <position position="116"/>
    </location>
</feature>
<feature type="modified residue" description="Phosphoserine" evidence="2">
    <location>
        <position position="118"/>
    </location>
</feature>
<feature type="modified residue" description="Phosphoserine; by PLK1" evidence="2">
    <location>
        <position position="123"/>
    </location>
</feature>
<feature type="modified residue" description="Phosphoserine" evidence="2">
    <location>
        <position position="137"/>
    </location>
</feature>
<feature type="modified residue" description="Phosphothreonine" evidence="2">
    <location>
        <position position="311"/>
    </location>
</feature>
<evidence type="ECO:0000250" key="1"/>
<evidence type="ECO:0000250" key="2">
    <source>
        <dbReference type="UniProtKB" id="P14635"/>
    </source>
</evidence>
<evidence type="ECO:0000250" key="3">
    <source>
        <dbReference type="UniProtKB" id="P24860"/>
    </source>
</evidence>
<evidence type="ECO:0000305" key="4"/>
<organism>
    <name type="scientific">Rattus norvegicus</name>
    <name type="common">Rat</name>
    <dbReference type="NCBI Taxonomy" id="10116"/>
    <lineage>
        <taxon>Eukaryota</taxon>
        <taxon>Metazoa</taxon>
        <taxon>Chordata</taxon>
        <taxon>Craniata</taxon>
        <taxon>Vertebrata</taxon>
        <taxon>Euteleostomi</taxon>
        <taxon>Mammalia</taxon>
        <taxon>Eutheria</taxon>
        <taxon>Euarchontoglires</taxon>
        <taxon>Glires</taxon>
        <taxon>Rodentia</taxon>
        <taxon>Myomorpha</taxon>
        <taxon>Muroidea</taxon>
        <taxon>Muridae</taxon>
        <taxon>Murinae</taxon>
        <taxon>Rattus</taxon>
    </lineage>
</organism>
<protein>
    <recommendedName>
        <fullName>G2/mitotic-specific cyclin-B1</fullName>
    </recommendedName>
</protein>
<sequence>MALRVTRNTKINTENKAKVSMAGAKRVPVAVAASKPLLRSRTALGDIGNKVSEQSRIPLKKETKKLGSGTVTVKALPKPVDKVPVCEPEVELDEPEPEPVMEVKHSPEPILVDTPSPSPMETSGCAPAEEYLCQAFSDVILAVSDVDADDGGDPNLCSEYVKDIYAYLRQLEEEQSVRPKYLLGREVTGNMRAILIDWLIQVQMKFRLLQETMYMTVSIIDRFMQDSCVPKKMLQLVGVTAMFIASKYEEMYPPEIGDFAFVTNNTYTKHQIRQMEMKILRVLNFSLGRPLPLHFLRRASKIGEVDVEQHTLAKYLMELSMLDYDMVHFAPSQIAAGAFCLALKILDNGEWTPTLQHYLSHTEESLLPVMQHLAKNIVMVNRGLTKHMTIKNKYATSKHAKISTLAQLNCTLVQNLSKAVTKA</sequence>
<gene>
    <name type="primary">Ccnb1</name>
</gene>
<proteinExistence type="evidence at transcript level"/>
<comment type="function">
    <text>Essential for the control of the cell cycle at the G2/M (mitosis) transition.</text>
</comment>
<comment type="subunit">
    <text evidence="2 3">Interacts with the CDC2 protein kinase to form a serine/threonine kinase holoenzyme complex also known as maturation promoting factor (MPF). The cyclin subunit imparts substrate specificity to the complex. Binds HEI10. Interacts with catalytically active RALBP1 and CDC2 during mitosis to form an endocytotic complex during interphase. Interacts with CCNF; interaction is required for nuclear localization. Interacts with CDK5RAP3. Interacts with RFPL4A and UBE2A. Interacts with INCA1.</text>
</comment>
<comment type="subcellular location">
    <subcellularLocation>
        <location>Cytoplasm</location>
    </subcellularLocation>
    <subcellularLocation>
        <location>Nucleus</location>
    </subcellularLocation>
    <subcellularLocation>
        <location evidence="1">Cytoplasm</location>
        <location evidence="1">Cytoskeleton</location>
        <location evidence="1">Microtubule organizing center</location>
        <location evidence="1">Centrosome</location>
    </subcellularLocation>
</comment>
<comment type="developmental stage">
    <text>Accumulates steadily during G2 and is abruptly destroyed at mitosis.</text>
</comment>
<comment type="PTM">
    <text evidence="1">Ubiquitinated by the SCF(NIPA) complex during interphase, leading to its destruction. Deubiquitinated by USP22 during G2/M phase (By similarity).</text>
</comment>
<comment type="PTM">
    <text evidence="1">Phosphorylated by PLK1 at Ser-123 on centrosomes during prophase: phosphorylation by PLK1 does not cause nuclear import. Phosphorylation at Ser-137 was also reported to be mediated by PLK1 but Ser-123 seems to be the primary phosphorylation site (By similarity).</text>
</comment>
<comment type="similarity">
    <text evidence="4">Belongs to the cyclin family. Cyclin AB subfamily.</text>
</comment>
<dbReference type="EMBL" id="X60768">
    <property type="protein sequence ID" value="CAA43178.1"/>
    <property type="molecule type" value="mRNA"/>
</dbReference>
<dbReference type="EMBL" id="X64589">
    <property type="protein sequence ID" value="CAA45877.1"/>
    <property type="molecule type" value="mRNA"/>
</dbReference>
<dbReference type="EMBL" id="L11995">
    <property type="protein sequence ID" value="AAC00032.1"/>
    <property type="molecule type" value="mRNA"/>
</dbReference>
<dbReference type="EMBL" id="BC059113">
    <property type="protein sequence ID" value="AAH59113.1"/>
    <property type="molecule type" value="mRNA"/>
</dbReference>
<dbReference type="PIR" id="S34226">
    <property type="entry name" value="S34226"/>
</dbReference>
<dbReference type="RefSeq" id="NP_741988.1">
    <property type="nucleotide sequence ID" value="NM_171991.3"/>
</dbReference>
<dbReference type="SMR" id="P30277"/>
<dbReference type="ComplexPortal" id="CPX-2072">
    <property type="entry name" value="Cyclin B1-CDK1 complex"/>
</dbReference>
<dbReference type="CORUM" id="P30277"/>
<dbReference type="FunCoup" id="P30277">
    <property type="interactions" value="2049"/>
</dbReference>
<dbReference type="IntAct" id="P30277">
    <property type="interactions" value="1"/>
</dbReference>
<dbReference type="STRING" id="10116.ENSRNOP00000075114"/>
<dbReference type="BindingDB" id="P30277"/>
<dbReference type="ChEMBL" id="CHEMBL2093"/>
<dbReference type="iPTMnet" id="P30277"/>
<dbReference type="PhosphoSitePlus" id="P30277"/>
<dbReference type="PaxDb" id="10116-ENSRNOP00000025297"/>
<dbReference type="Ensembl" id="ENSRNOT00000103969.1">
    <property type="protein sequence ID" value="ENSRNOP00000095719.1"/>
    <property type="gene ID" value="ENSRNOG00000058539.2"/>
</dbReference>
<dbReference type="GeneID" id="25203"/>
<dbReference type="KEGG" id="rno:25203"/>
<dbReference type="UCSC" id="RGD:2291">
    <property type="organism name" value="rat"/>
</dbReference>
<dbReference type="AGR" id="RGD:2291"/>
<dbReference type="CTD" id="891"/>
<dbReference type="RGD" id="2291">
    <property type="gene designation" value="Ccnb1"/>
</dbReference>
<dbReference type="eggNOG" id="KOG0653">
    <property type="taxonomic scope" value="Eukaryota"/>
</dbReference>
<dbReference type="GeneTree" id="ENSGT00940000154586"/>
<dbReference type="HOGENOM" id="CLU_020695_2_1_1"/>
<dbReference type="InParanoid" id="P30277"/>
<dbReference type="OrthoDB" id="5590282at2759"/>
<dbReference type="PhylomeDB" id="P30277"/>
<dbReference type="TreeFam" id="TF101001"/>
<dbReference type="Reactome" id="R-RNO-174048">
    <property type="pathway name" value="APC/C:Cdc20 mediated degradation of Cyclin B"/>
</dbReference>
<dbReference type="Reactome" id="R-RNO-176408">
    <property type="pathway name" value="Regulation of APC/C activators between G1/S and early anaphase"/>
</dbReference>
<dbReference type="Reactome" id="R-RNO-176412">
    <property type="pathway name" value="Phosphorylation of the APC/C"/>
</dbReference>
<dbReference type="Reactome" id="R-RNO-176417">
    <property type="pathway name" value="Phosphorylation of Emi1"/>
</dbReference>
<dbReference type="Reactome" id="R-RNO-2299718">
    <property type="pathway name" value="Condensation of Prophase Chromosomes"/>
</dbReference>
<dbReference type="Reactome" id="R-RNO-2500257">
    <property type="pathway name" value="Resolution of Sister Chromatid Cohesion"/>
</dbReference>
<dbReference type="Reactome" id="R-RNO-2565942">
    <property type="pathway name" value="Regulation of PLK1 Activity at G2/M Transition"/>
</dbReference>
<dbReference type="Reactome" id="R-RNO-2980767">
    <property type="pathway name" value="Activation of NIMA Kinases NEK9, NEK6, NEK7"/>
</dbReference>
<dbReference type="Reactome" id="R-RNO-2995383">
    <property type="pathway name" value="Initiation of Nuclear Envelope (NE) Reformation"/>
</dbReference>
<dbReference type="Reactome" id="R-RNO-3301854">
    <property type="pathway name" value="Nuclear Pore Complex (NPC) Disassembly"/>
</dbReference>
<dbReference type="Reactome" id="R-RNO-4419969">
    <property type="pathway name" value="Depolymerization of the Nuclear Lamina"/>
</dbReference>
<dbReference type="Reactome" id="R-RNO-6804114">
    <property type="pathway name" value="TP53 Regulates Transcription of Genes Involved in G2 Cell Cycle Arrest"/>
</dbReference>
<dbReference type="Reactome" id="R-RNO-68875">
    <property type="pathway name" value="Mitotic Prophase"/>
</dbReference>
<dbReference type="Reactome" id="R-RNO-69273">
    <property type="pathway name" value="Cyclin A/B1/B2 associated events during G2/M transition"/>
</dbReference>
<dbReference type="Reactome" id="R-RNO-69478">
    <property type="pathway name" value="G2/M DNA replication checkpoint"/>
</dbReference>
<dbReference type="Reactome" id="R-RNO-75035">
    <property type="pathway name" value="Chk1/Chk2(Cds1) mediated inactivation of Cyclin B:Cdk1 complex"/>
</dbReference>
<dbReference type="Reactome" id="R-RNO-8852276">
    <property type="pathway name" value="The role of GTSE1 in G2/M progression after G2 checkpoint"/>
</dbReference>
<dbReference type="PRO" id="PR:P30277"/>
<dbReference type="Proteomes" id="UP000002494">
    <property type="component" value="Chromosome 2"/>
</dbReference>
<dbReference type="Bgee" id="ENSRNOG00000058539">
    <property type="expression patterns" value="Expressed in thymus and 18 other cell types or tissues"/>
</dbReference>
<dbReference type="GO" id="GO:0005813">
    <property type="term" value="C:centrosome"/>
    <property type="evidence" value="ECO:0000250"/>
    <property type="project" value="UniProtKB"/>
</dbReference>
<dbReference type="GO" id="GO:0097125">
    <property type="term" value="C:cyclin B1-CDK1 complex"/>
    <property type="evidence" value="ECO:0000266"/>
    <property type="project" value="RGD"/>
</dbReference>
<dbReference type="GO" id="GO:0005737">
    <property type="term" value="C:cytoplasm"/>
    <property type="evidence" value="ECO:0000266"/>
    <property type="project" value="RGD"/>
</dbReference>
<dbReference type="GO" id="GO:0005829">
    <property type="term" value="C:cytosol"/>
    <property type="evidence" value="ECO:0007669"/>
    <property type="project" value="Ensembl"/>
</dbReference>
<dbReference type="GO" id="GO:0016020">
    <property type="term" value="C:membrane"/>
    <property type="evidence" value="ECO:0000266"/>
    <property type="project" value="RGD"/>
</dbReference>
<dbReference type="GO" id="GO:0005815">
    <property type="term" value="C:microtubule organizing center"/>
    <property type="evidence" value="ECO:0000318"/>
    <property type="project" value="GO_Central"/>
</dbReference>
<dbReference type="GO" id="GO:0005759">
    <property type="term" value="C:mitochondrial matrix"/>
    <property type="evidence" value="ECO:0000266"/>
    <property type="project" value="RGD"/>
</dbReference>
<dbReference type="GO" id="GO:0005634">
    <property type="term" value="C:nucleus"/>
    <property type="evidence" value="ECO:0000266"/>
    <property type="project" value="RGD"/>
</dbReference>
<dbReference type="GO" id="GO:0000940">
    <property type="term" value="C:outer kinetochore"/>
    <property type="evidence" value="ECO:0000266"/>
    <property type="project" value="RGD"/>
</dbReference>
<dbReference type="GO" id="GO:0000922">
    <property type="term" value="C:spindle pole"/>
    <property type="evidence" value="ECO:0000266"/>
    <property type="project" value="RGD"/>
</dbReference>
<dbReference type="GO" id="GO:0061575">
    <property type="term" value="F:cyclin-dependent protein serine/threonine kinase activator activity"/>
    <property type="evidence" value="ECO:0000266"/>
    <property type="project" value="RGD"/>
</dbReference>
<dbReference type="GO" id="GO:0016538">
    <property type="term" value="F:cyclin-dependent protein serine/threonine kinase regulator activity"/>
    <property type="evidence" value="ECO:0000318"/>
    <property type="project" value="GO_Central"/>
</dbReference>
<dbReference type="GO" id="GO:0035173">
    <property type="term" value="F:histone kinase activity"/>
    <property type="evidence" value="ECO:0000266"/>
    <property type="project" value="RGD"/>
</dbReference>
<dbReference type="GO" id="GO:0005113">
    <property type="term" value="F:patched binding"/>
    <property type="evidence" value="ECO:0000266"/>
    <property type="project" value="RGD"/>
</dbReference>
<dbReference type="GO" id="GO:0019901">
    <property type="term" value="F:protein kinase binding"/>
    <property type="evidence" value="ECO:0000353"/>
    <property type="project" value="RGD"/>
</dbReference>
<dbReference type="GO" id="GO:0044389">
    <property type="term" value="F:ubiquitin-like protein ligase binding"/>
    <property type="evidence" value="ECO:0000266"/>
    <property type="project" value="RGD"/>
</dbReference>
<dbReference type="GO" id="GO:0051301">
    <property type="term" value="P:cell division"/>
    <property type="evidence" value="ECO:0007669"/>
    <property type="project" value="UniProtKB-KW"/>
</dbReference>
<dbReference type="GO" id="GO:0071398">
    <property type="term" value="P:cellular response to fatty acid"/>
    <property type="evidence" value="ECO:0000270"/>
    <property type="project" value="RGD"/>
</dbReference>
<dbReference type="GO" id="GO:0071456">
    <property type="term" value="P:cellular response to hypoxia"/>
    <property type="evidence" value="ECO:0000270"/>
    <property type="project" value="RGD"/>
</dbReference>
<dbReference type="GO" id="GO:0071283">
    <property type="term" value="P:cellular response to iron(III) ion"/>
    <property type="evidence" value="ECO:0000270"/>
    <property type="project" value="RGD"/>
</dbReference>
<dbReference type="GO" id="GO:0048565">
    <property type="term" value="P:digestive tract development"/>
    <property type="evidence" value="ECO:0000270"/>
    <property type="project" value="RGD"/>
</dbReference>
<dbReference type="GO" id="GO:0000082">
    <property type="term" value="P:G1/S transition of mitotic cell cycle"/>
    <property type="evidence" value="ECO:0000318"/>
    <property type="project" value="GO_Central"/>
</dbReference>
<dbReference type="GO" id="GO:0001701">
    <property type="term" value="P:in utero embryonic development"/>
    <property type="evidence" value="ECO:0000266"/>
    <property type="project" value="RGD"/>
</dbReference>
<dbReference type="GO" id="GO:0007080">
    <property type="term" value="P:mitotic metaphase chromosome alignment"/>
    <property type="evidence" value="ECO:0000266"/>
    <property type="project" value="RGD"/>
</dbReference>
<dbReference type="GO" id="GO:0007052">
    <property type="term" value="P:mitotic spindle organization"/>
    <property type="evidence" value="ECO:0000266"/>
    <property type="project" value="RGD"/>
</dbReference>
<dbReference type="GO" id="GO:0010629">
    <property type="term" value="P:negative regulation of gene expression"/>
    <property type="evidence" value="ECO:0000315"/>
    <property type="project" value="RGD"/>
</dbReference>
<dbReference type="GO" id="GO:1904145">
    <property type="term" value="P:negative regulation of meiotic cell cycle process involved in oocyte maturation"/>
    <property type="evidence" value="ECO:0000266"/>
    <property type="project" value="RGD"/>
</dbReference>
<dbReference type="GO" id="GO:0001556">
    <property type="term" value="P:oocyte maturation"/>
    <property type="evidence" value="ECO:0000315"/>
    <property type="project" value="RGD"/>
</dbReference>
<dbReference type="GO" id="GO:0051987">
    <property type="term" value="P:positive regulation of attachment of spindle microtubules to kinetochore"/>
    <property type="evidence" value="ECO:0000266"/>
    <property type="project" value="RGD"/>
</dbReference>
<dbReference type="GO" id="GO:0060045">
    <property type="term" value="P:positive regulation of cardiac muscle cell proliferation"/>
    <property type="evidence" value="ECO:0000314"/>
    <property type="project" value="RGD"/>
</dbReference>
<dbReference type="GO" id="GO:0045787">
    <property type="term" value="P:positive regulation of cell cycle"/>
    <property type="evidence" value="ECO:0000266"/>
    <property type="project" value="RGD"/>
</dbReference>
<dbReference type="GO" id="GO:0048146">
    <property type="term" value="P:positive regulation of fibroblast proliferation"/>
    <property type="evidence" value="ECO:0000266"/>
    <property type="project" value="RGD"/>
</dbReference>
<dbReference type="GO" id="GO:0010971">
    <property type="term" value="P:positive regulation of G2/M transition of mitotic cell cycle"/>
    <property type="evidence" value="ECO:0000266"/>
    <property type="project" value="RGD"/>
</dbReference>
<dbReference type="GO" id="GO:1905448">
    <property type="term" value="P:positive regulation of mitochondrial ATP synthesis coupled electron transport"/>
    <property type="evidence" value="ECO:0000266"/>
    <property type="project" value="RGD"/>
</dbReference>
<dbReference type="GO" id="GO:0045931">
    <property type="term" value="P:positive regulation of mitotic cell cycle"/>
    <property type="evidence" value="ECO:0000266"/>
    <property type="project" value="RGD"/>
</dbReference>
<dbReference type="GO" id="GO:0031442">
    <property type="term" value="P:positive regulation of mRNA 3'-end processing"/>
    <property type="evidence" value="ECO:0000315"/>
    <property type="project" value="RGD"/>
</dbReference>
<dbReference type="GO" id="GO:0065003">
    <property type="term" value="P:protein-containing complex assembly"/>
    <property type="evidence" value="ECO:0000314"/>
    <property type="project" value="RGD"/>
</dbReference>
<dbReference type="GO" id="GO:0060623">
    <property type="term" value="P:regulation of chromosome condensation"/>
    <property type="evidence" value="ECO:0000315"/>
    <property type="project" value="RGD"/>
</dbReference>
<dbReference type="GO" id="GO:0090266">
    <property type="term" value="P:regulation of mitotic cell cycle spindle assembly checkpoint"/>
    <property type="evidence" value="ECO:0000266"/>
    <property type="project" value="RGD"/>
</dbReference>
<dbReference type="GO" id="GO:0046680">
    <property type="term" value="P:response to DDT"/>
    <property type="evidence" value="ECO:0000270"/>
    <property type="project" value="RGD"/>
</dbReference>
<dbReference type="GO" id="GO:0009612">
    <property type="term" value="P:response to mechanical stimulus"/>
    <property type="evidence" value="ECO:0000270"/>
    <property type="project" value="RGD"/>
</dbReference>
<dbReference type="GO" id="GO:0009636">
    <property type="term" value="P:response to toxic substance"/>
    <property type="evidence" value="ECO:0000270"/>
    <property type="project" value="RGD"/>
</dbReference>
<dbReference type="GO" id="GO:0009410">
    <property type="term" value="P:response to xenobiotic stimulus"/>
    <property type="evidence" value="ECO:0000270"/>
    <property type="project" value="RGD"/>
</dbReference>
<dbReference type="GO" id="GO:0007283">
    <property type="term" value="P:spermatogenesis"/>
    <property type="evidence" value="ECO:0000270"/>
    <property type="project" value="RGD"/>
</dbReference>
<dbReference type="GO" id="GO:0042246">
    <property type="term" value="P:tissue regeneration"/>
    <property type="evidence" value="ECO:0000270"/>
    <property type="project" value="RGD"/>
</dbReference>
<dbReference type="GO" id="GO:0055015">
    <property type="term" value="P:ventricular cardiac muscle cell development"/>
    <property type="evidence" value="ECO:0000270"/>
    <property type="project" value="RGD"/>
</dbReference>
<dbReference type="CDD" id="cd20565">
    <property type="entry name" value="CYCLIN_CCNB1_rpt1"/>
    <property type="match status" value="1"/>
</dbReference>
<dbReference type="FunFam" id="1.10.472.10:FF:000027">
    <property type="entry name" value="G2/mitotic-specific cyclin-B1"/>
    <property type="match status" value="1"/>
</dbReference>
<dbReference type="Gene3D" id="1.10.472.10">
    <property type="entry name" value="Cyclin-like"/>
    <property type="match status" value="2"/>
</dbReference>
<dbReference type="InterPro" id="IPR048026">
    <property type="entry name" value="CCNB1_first_cyclin-box"/>
</dbReference>
<dbReference type="InterPro" id="IPR039361">
    <property type="entry name" value="Cyclin"/>
</dbReference>
<dbReference type="InterPro" id="IPR013763">
    <property type="entry name" value="Cyclin-like_dom"/>
</dbReference>
<dbReference type="InterPro" id="IPR036915">
    <property type="entry name" value="Cyclin-like_sf"/>
</dbReference>
<dbReference type="InterPro" id="IPR046965">
    <property type="entry name" value="Cyclin_A/B-like"/>
</dbReference>
<dbReference type="InterPro" id="IPR004367">
    <property type="entry name" value="Cyclin_C-dom"/>
</dbReference>
<dbReference type="InterPro" id="IPR006671">
    <property type="entry name" value="Cyclin_N"/>
</dbReference>
<dbReference type="InterPro" id="IPR048258">
    <property type="entry name" value="Cyclins_cyclin-box"/>
</dbReference>
<dbReference type="PANTHER" id="PTHR10177">
    <property type="entry name" value="CYCLINS"/>
    <property type="match status" value="1"/>
</dbReference>
<dbReference type="Pfam" id="PF02984">
    <property type="entry name" value="Cyclin_C"/>
    <property type="match status" value="1"/>
</dbReference>
<dbReference type="Pfam" id="PF00134">
    <property type="entry name" value="Cyclin_N"/>
    <property type="match status" value="1"/>
</dbReference>
<dbReference type="PIRSF" id="PIRSF001771">
    <property type="entry name" value="Cyclin_A_B_D_E"/>
    <property type="match status" value="1"/>
</dbReference>
<dbReference type="SMART" id="SM00385">
    <property type="entry name" value="CYCLIN"/>
    <property type="match status" value="2"/>
</dbReference>
<dbReference type="SMART" id="SM01332">
    <property type="entry name" value="Cyclin_C"/>
    <property type="match status" value="1"/>
</dbReference>
<dbReference type="SUPFAM" id="SSF47954">
    <property type="entry name" value="Cyclin-like"/>
    <property type="match status" value="2"/>
</dbReference>
<dbReference type="PROSITE" id="PS00292">
    <property type="entry name" value="CYCLINS"/>
    <property type="match status" value="1"/>
</dbReference>
<reference key="1">
    <citation type="submission" date="1992-04" db="EMBL/GenBank/DDBJ databases">
        <title>Nucleotide sequences of cDNAs encoding rat cdc2 + and cyclin 2.</title>
        <authorList>
            <person name="Kanaoka Y."/>
            <person name="Nojima H."/>
            <person name="Okayama H."/>
        </authorList>
    </citation>
    <scope>NUCLEOTIDE SEQUENCE [MRNA]</scope>
</reference>
<reference key="2">
    <citation type="journal article" date="1994" name="Int. J. Radiat. Oncol. Biol. Phys.">
        <title>The effects of radiation on the expression of a newly cloned and characterized rat cyclin B mRNA.</title>
        <authorList>
            <person name="Markiewicz D.A."/>
            <person name="McKenna W.G."/>
            <person name="Flick M.B."/>
            <person name="Maity A."/>
            <person name="Muschel R.J."/>
        </authorList>
    </citation>
    <scope>NUCLEOTIDE SEQUENCE [MRNA]</scope>
    <source>
        <strain>Sprague-Dawley</strain>
        <tissue>Fibroblast</tissue>
    </source>
</reference>
<reference key="3">
    <citation type="journal article" date="1994" name="Cell Growth Differ.">
        <title>Posttranscriptional regulation of cyclin B messenger RNA expression in the regenerating rat liver.</title>
        <authorList>
            <person name="Trembley J.H."/>
            <person name="Kren B.T."/>
            <person name="Steer C.J."/>
        </authorList>
    </citation>
    <scope>NUCLEOTIDE SEQUENCE [MRNA]</scope>
    <source>
        <strain>Sprague-Dawley</strain>
        <tissue>Testis</tissue>
    </source>
</reference>
<reference key="4">
    <citation type="journal article" date="2004" name="Genome Res.">
        <title>The status, quality, and expansion of the NIH full-length cDNA project: the Mammalian Gene Collection (MGC).</title>
        <authorList>
            <consortium name="The MGC Project Team"/>
        </authorList>
    </citation>
    <scope>NUCLEOTIDE SEQUENCE [LARGE SCALE MRNA]</scope>
    <source>
        <tissue>Pituitary</tissue>
    </source>
</reference>
<accession>P30277</accession>
<keyword id="KW-0131">Cell cycle</keyword>
<keyword id="KW-0132">Cell division</keyword>
<keyword id="KW-0195">Cyclin</keyword>
<keyword id="KW-0963">Cytoplasm</keyword>
<keyword id="KW-0206">Cytoskeleton</keyword>
<keyword id="KW-0498">Mitosis</keyword>
<keyword id="KW-0539">Nucleus</keyword>
<keyword id="KW-0597">Phosphoprotein</keyword>
<keyword id="KW-1185">Reference proteome</keyword>
<keyword id="KW-0832">Ubl conjugation</keyword>
<name>CCNB1_RAT</name>